<dbReference type="EMBL" id="CP000970">
    <property type="protein sequence ID" value="ACB15698.1"/>
    <property type="molecule type" value="Genomic_DNA"/>
</dbReference>
<dbReference type="RefSeq" id="WP_000074164.1">
    <property type="nucleotide sequence ID" value="NC_010498.1"/>
</dbReference>
<dbReference type="SMR" id="B1LIV8"/>
<dbReference type="KEGG" id="ecm:EcSMS35_2077"/>
<dbReference type="HOGENOM" id="CLU_001265_57_3_6"/>
<dbReference type="Proteomes" id="UP000007011">
    <property type="component" value="Chromosome"/>
</dbReference>
<dbReference type="GO" id="GO:0005886">
    <property type="term" value="C:plasma membrane"/>
    <property type="evidence" value="ECO:0007669"/>
    <property type="project" value="UniProtKB-SubCell"/>
</dbReference>
<dbReference type="GO" id="GO:0022857">
    <property type="term" value="F:transmembrane transporter activity"/>
    <property type="evidence" value="ECO:0007669"/>
    <property type="project" value="UniProtKB-UniRule"/>
</dbReference>
<dbReference type="GO" id="GO:0046677">
    <property type="term" value="P:response to antibiotic"/>
    <property type="evidence" value="ECO:0007669"/>
    <property type="project" value="UniProtKB-KW"/>
</dbReference>
<dbReference type="CDD" id="cd17391">
    <property type="entry name" value="MFS_MdtG_MDR_like"/>
    <property type="match status" value="1"/>
</dbReference>
<dbReference type="FunFam" id="1.20.1250.20:FF:000020">
    <property type="entry name" value="Multidrug resistance protein MdtG"/>
    <property type="match status" value="1"/>
</dbReference>
<dbReference type="FunFam" id="1.20.1250.20:FF:000022">
    <property type="entry name" value="Multidrug resistance protein MdtG"/>
    <property type="match status" value="1"/>
</dbReference>
<dbReference type="Gene3D" id="1.20.1250.20">
    <property type="entry name" value="MFS general substrate transporter like domains"/>
    <property type="match status" value="2"/>
</dbReference>
<dbReference type="HAMAP" id="MF_01528">
    <property type="entry name" value="MFS_MdtG"/>
    <property type="match status" value="1"/>
</dbReference>
<dbReference type="InterPro" id="IPR011701">
    <property type="entry name" value="MFS"/>
</dbReference>
<dbReference type="InterPro" id="IPR020846">
    <property type="entry name" value="MFS_dom"/>
</dbReference>
<dbReference type="InterPro" id="IPR050497">
    <property type="entry name" value="MFS_MdtG_subfamily"/>
</dbReference>
<dbReference type="InterPro" id="IPR036259">
    <property type="entry name" value="MFS_trans_sf"/>
</dbReference>
<dbReference type="InterPro" id="IPR023692">
    <property type="entry name" value="Mutidrug-R_MdtG"/>
</dbReference>
<dbReference type="InterPro" id="IPR001958">
    <property type="entry name" value="Tet-R_TetA/multi-R_MdtG-like"/>
</dbReference>
<dbReference type="NCBIfam" id="NF007372">
    <property type="entry name" value="PRK09874.1"/>
    <property type="match status" value="1"/>
</dbReference>
<dbReference type="PANTHER" id="PTHR43414">
    <property type="entry name" value="MULTIDRUG RESISTANCE PROTEIN MDTG"/>
    <property type="match status" value="1"/>
</dbReference>
<dbReference type="PANTHER" id="PTHR43414:SF6">
    <property type="entry name" value="MULTIDRUG RESISTANCE PROTEIN MDTG"/>
    <property type="match status" value="1"/>
</dbReference>
<dbReference type="Pfam" id="PF07690">
    <property type="entry name" value="MFS_1"/>
    <property type="match status" value="1"/>
</dbReference>
<dbReference type="PRINTS" id="PR01035">
    <property type="entry name" value="TCRTETA"/>
</dbReference>
<dbReference type="SUPFAM" id="SSF103473">
    <property type="entry name" value="MFS general substrate transporter"/>
    <property type="match status" value="1"/>
</dbReference>
<dbReference type="PROSITE" id="PS50850">
    <property type="entry name" value="MFS"/>
    <property type="match status" value="1"/>
</dbReference>
<protein>
    <recommendedName>
        <fullName evidence="1">Multidrug resistance protein MdtG</fullName>
    </recommendedName>
</protein>
<organism>
    <name type="scientific">Escherichia coli (strain SMS-3-5 / SECEC)</name>
    <dbReference type="NCBI Taxonomy" id="439855"/>
    <lineage>
        <taxon>Bacteria</taxon>
        <taxon>Pseudomonadati</taxon>
        <taxon>Pseudomonadota</taxon>
        <taxon>Gammaproteobacteria</taxon>
        <taxon>Enterobacterales</taxon>
        <taxon>Enterobacteriaceae</taxon>
        <taxon>Escherichia</taxon>
    </lineage>
</organism>
<reference key="1">
    <citation type="journal article" date="2008" name="J. Bacteriol.">
        <title>Insights into the environmental resistance gene pool from the genome sequence of the multidrug-resistant environmental isolate Escherichia coli SMS-3-5.</title>
        <authorList>
            <person name="Fricke W.F."/>
            <person name="Wright M.S."/>
            <person name="Lindell A.H."/>
            <person name="Harkins D.M."/>
            <person name="Baker-Austin C."/>
            <person name="Ravel J."/>
            <person name="Stepanauskas R."/>
        </authorList>
    </citation>
    <scope>NUCLEOTIDE SEQUENCE [LARGE SCALE GENOMIC DNA]</scope>
    <source>
        <strain>SMS-3-5 / SECEC</strain>
    </source>
</reference>
<evidence type="ECO:0000255" key="1">
    <source>
        <dbReference type="HAMAP-Rule" id="MF_01528"/>
    </source>
</evidence>
<feature type="chain" id="PRO_1000200781" description="Multidrug resistance protein MdtG">
    <location>
        <begin position="1"/>
        <end position="408"/>
    </location>
</feature>
<feature type="transmembrane region" description="Helical" evidence="1">
    <location>
        <begin position="16"/>
        <end position="36"/>
    </location>
</feature>
<feature type="transmembrane region" description="Helical" evidence="1">
    <location>
        <begin position="58"/>
        <end position="78"/>
    </location>
</feature>
<feature type="transmembrane region" description="Helical" evidence="1">
    <location>
        <begin position="92"/>
        <end position="112"/>
    </location>
</feature>
<feature type="transmembrane region" description="Helical" evidence="1">
    <location>
        <begin position="115"/>
        <end position="135"/>
    </location>
</feature>
<feature type="transmembrane region" description="Helical" evidence="1">
    <location>
        <begin position="146"/>
        <end position="166"/>
    </location>
</feature>
<feature type="transmembrane region" description="Helical" evidence="1">
    <location>
        <begin position="173"/>
        <end position="193"/>
    </location>
</feature>
<feature type="transmembrane region" description="Helical" evidence="1">
    <location>
        <begin position="221"/>
        <end position="241"/>
    </location>
</feature>
<feature type="transmembrane region" description="Helical" evidence="1">
    <location>
        <begin position="256"/>
        <end position="276"/>
    </location>
</feature>
<feature type="transmembrane region" description="Helical" evidence="1">
    <location>
        <begin position="290"/>
        <end position="310"/>
    </location>
</feature>
<feature type="transmembrane region" description="Helical" evidence="1">
    <location>
        <begin position="378"/>
        <end position="398"/>
    </location>
</feature>
<gene>
    <name evidence="1" type="primary">mdtG</name>
    <name type="ordered locus">EcSMS35_2077</name>
</gene>
<name>MDTG_ECOSM</name>
<accession>B1LIV8</accession>
<proteinExistence type="inferred from homology"/>
<keyword id="KW-0046">Antibiotic resistance</keyword>
<keyword id="KW-0997">Cell inner membrane</keyword>
<keyword id="KW-1003">Cell membrane</keyword>
<keyword id="KW-0472">Membrane</keyword>
<keyword id="KW-0812">Transmembrane</keyword>
<keyword id="KW-1133">Transmembrane helix</keyword>
<keyword id="KW-0813">Transport</keyword>
<comment type="function">
    <text evidence="1">Confers resistance to fosfomycin and deoxycholate.</text>
</comment>
<comment type="subcellular location">
    <subcellularLocation>
        <location evidence="1">Cell inner membrane</location>
        <topology evidence="1">Multi-pass membrane protein</topology>
    </subcellularLocation>
</comment>
<comment type="similarity">
    <text evidence="1">Belongs to the major facilitator superfamily. DHA1 family. MdtG (TC 2.A.1.2.20) subfamily.</text>
</comment>
<sequence>MSPCENDTPINWKRNLIVAWLGCFLTGAAFSLVMPFLPLYVEQLGVTGHSALNMWSGIVFSITFLFSAIASPFWGGLADRKGRKLMLLRSALGMGIVMVLMGLAQNIWQFLILRALLGLLGGFVPNANALIATQVPRNKSGWALGTLSTGGVSGALLGPMAGGLLADSYGLRPVFFITASVLILCFFVTLFCIREKFQPVSKKEMLHMREVVTSLKNPKLILSLFVTTLIIQVATGSIAPILTLYVRELAGNVSNVAFISGMIASVPGVAALLSAPRLGKLGDRIGPEKILITALIFSVLLLIPMSYVQTPLQLGILRFLLGAADGALLPAVQTLLVYNSSNQIAGRIFSYNQSFRDIGNVTGPLMGAAISANYGFRAVFLVTAGVVLFNAVYSWNSLRRRRIPQVSN</sequence>